<reference key="1">
    <citation type="journal article" date="2005" name="Nature">
        <title>The genome sequence of the rice blast fungus Magnaporthe grisea.</title>
        <authorList>
            <person name="Dean R.A."/>
            <person name="Talbot N.J."/>
            <person name="Ebbole D.J."/>
            <person name="Farman M.L."/>
            <person name="Mitchell T.K."/>
            <person name="Orbach M.J."/>
            <person name="Thon M.R."/>
            <person name="Kulkarni R."/>
            <person name="Xu J.-R."/>
            <person name="Pan H."/>
            <person name="Read N.D."/>
            <person name="Lee Y.-H."/>
            <person name="Carbone I."/>
            <person name="Brown D."/>
            <person name="Oh Y.Y."/>
            <person name="Donofrio N."/>
            <person name="Jeong J.S."/>
            <person name="Soanes D.M."/>
            <person name="Djonovic S."/>
            <person name="Kolomiets E."/>
            <person name="Rehmeyer C."/>
            <person name="Li W."/>
            <person name="Harding M."/>
            <person name="Kim S."/>
            <person name="Lebrun M.-H."/>
            <person name="Bohnert H."/>
            <person name="Coughlan S."/>
            <person name="Butler J."/>
            <person name="Calvo S.E."/>
            <person name="Ma L.-J."/>
            <person name="Nicol R."/>
            <person name="Purcell S."/>
            <person name="Nusbaum C."/>
            <person name="Galagan J.E."/>
            <person name="Birren B.W."/>
        </authorList>
    </citation>
    <scope>NUCLEOTIDE SEQUENCE [LARGE SCALE GENOMIC DNA]</scope>
    <source>
        <strain>70-15 / ATCC MYA-4617 / FGSC 8958</strain>
    </source>
</reference>
<comment type="function">
    <text evidence="1">Component of the eukaryotic translation initiation factor 3 (eIF-3) complex, which is involved in protein synthesis of a specialized repertoire of mRNAs and, together with other initiation factors, stimulates binding of mRNA and methionyl-tRNAi to the 40S ribosome. The eIF-3 complex specifically targets and initiates translation of a subset of mRNAs involved in cell proliferation.</text>
</comment>
<comment type="subunit">
    <text evidence="1">Component of the eukaryotic translation initiation factor 3 (eIF-3) complex.</text>
</comment>
<comment type="subcellular location">
    <subcellularLocation>
        <location evidence="1">Cytoplasm</location>
    </subcellularLocation>
</comment>
<comment type="similarity">
    <text evidence="1">Belongs to the eIF-3 subunit I family.</text>
</comment>
<keyword id="KW-0963">Cytoplasm</keyword>
<keyword id="KW-0396">Initiation factor</keyword>
<keyword id="KW-0648">Protein biosynthesis</keyword>
<keyword id="KW-1185">Reference proteome</keyword>
<keyword id="KW-0677">Repeat</keyword>
<keyword id="KW-0853">WD repeat</keyword>
<name>EIF3I_PYRO7</name>
<protein>
    <recommendedName>
        <fullName evidence="1">Eukaryotic translation initiation factor 3 subunit I</fullName>
        <shortName evidence="1">eIF3i</shortName>
    </recommendedName>
    <alternativeName>
        <fullName evidence="1">Eukaryotic translation initiation factor 3 39 kDa subunit homolog</fullName>
        <shortName evidence="1">eIF-3 39 kDa subunit homolog</shortName>
    </alternativeName>
</protein>
<proteinExistence type="inferred from homology"/>
<feature type="chain" id="PRO_0000365369" description="Eukaryotic translation initiation factor 3 subunit I">
    <location>
        <begin position="1"/>
        <end position="341"/>
    </location>
</feature>
<feature type="repeat" description="WD 1">
    <location>
        <begin position="8"/>
        <end position="49"/>
    </location>
</feature>
<feature type="repeat" description="WD 2">
    <location>
        <begin position="50"/>
        <end position="91"/>
    </location>
</feature>
<feature type="repeat" description="WD 3">
    <location>
        <begin position="145"/>
        <end position="184"/>
    </location>
</feature>
<feature type="repeat" description="WD 4">
    <location>
        <begin position="189"/>
        <end position="228"/>
    </location>
</feature>
<feature type="repeat" description="WD 5">
    <location>
        <begin position="286"/>
        <end position="325"/>
    </location>
</feature>
<accession>A4RDD7</accession>
<accession>G4NCV4</accession>
<dbReference type="EMBL" id="CM001235">
    <property type="protein sequence ID" value="EHA48347.1"/>
    <property type="molecule type" value="Genomic_DNA"/>
</dbReference>
<dbReference type="RefSeq" id="XP_003717931.1">
    <property type="nucleotide sequence ID" value="XM_003717883.1"/>
</dbReference>
<dbReference type="SMR" id="A4RDD7"/>
<dbReference type="FunCoup" id="A4RDD7">
    <property type="interactions" value="1080"/>
</dbReference>
<dbReference type="STRING" id="242507.A4RDD7"/>
<dbReference type="EnsemblFungi" id="MGG_01013T0">
    <property type="protein sequence ID" value="MGG_01013T0"/>
    <property type="gene ID" value="MGG_01013"/>
</dbReference>
<dbReference type="GeneID" id="2674740"/>
<dbReference type="KEGG" id="mgr:MGG_01013"/>
<dbReference type="VEuPathDB" id="FungiDB:MGG_01013"/>
<dbReference type="eggNOG" id="KOG0643">
    <property type="taxonomic scope" value="Eukaryota"/>
</dbReference>
<dbReference type="HOGENOM" id="CLU_043845_0_1_1"/>
<dbReference type="InParanoid" id="A4RDD7"/>
<dbReference type="OMA" id="VWFSHNG"/>
<dbReference type="OrthoDB" id="24966at2759"/>
<dbReference type="Proteomes" id="UP000009058">
    <property type="component" value="Chromosome 5"/>
</dbReference>
<dbReference type="GO" id="GO:0016282">
    <property type="term" value="C:eukaryotic 43S preinitiation complex"/>
    <property type="evidence" value="ECO:0007669"/>
    <property type="project" value="UniProtKB-UniRule"/>
</dbReference>
<dbReference type="GO" id="GO:0033290">
    <property type="term" value="C:eukaryotic 48S preinitiation complex"/>
    <property type="evidence" value="ECO:0007669"/>
    <property type="project" value="UniProtKB-UniRule"/>
</dbReference>
<dbReference type="GO" id="GO:0071540">
    <property type="term" value="C:eukaryotic translation initiation factor 3 complex, eIF3e"/>
    <property type="evidence" value="ECO:0007669"/>
    <property type="project" value="EnsemblFungi"/>
</dbReference>
<dbReference type="GO" id="GO:0071541">
    <property type="term" value="C:eukaryotic translation initiation factor 3 complex, eIF3m"/>
    <property type="evidence" value="ECO:0007669"/>
    <property type="project" value="EnsemblFungi"/>
</dbReference>
<dbReference type="GO" id="GO:0034399">
    <property type="term" value="C:nuclear periphery"/>
    <property type="evidence" value="ECO:0007669"/>
    <property type="project" value="EnsemblFungi"/>
</dbReference>
<dbReference type="GO" id="GO:0003723">
    <property type="term" value="F:RNA binding"/>
    <property type="evidence" value="ECO:0007669"/>
    <property type="project" value="TreeGrafter"/>
</dbReference>
<dbReference type="GO" id="GO:0003743">
    <property type="term" value="F:translation initiation factor activity"/>
    <property type="evidence" value="ECO:0007669"/>
    <property type="project" value="UniProtKB-UniRule"/>
</dbReference>
<dbReference type="GO" id="GO:0001732">
    <property type="term" value="P:formation of cytoplasmic translation initiation complex"/>
    <property type="evidence" value="ECO:0007669"/>
    <property type="project" value="UniProtKB-UniRule"/>
</dbReference>
<dbReference type="FunFam" id="2.130.10.10:FF:000127">
    <property type="entry name" value="Eukaryotic translation initiation factor 3 subunit I"/>
    <property type="match status" value="1"/>
</dbReference>
<dbReference type="Gene3D" id="2.130.10.10">
    <property type="entry name" value="YVTN repeat-like/Quinoprotein amine dehydrogenase"/>
    <property type="match status" value="1"/>
</dbReference>
<dbReference type="HAMAP" id="MF_03008">
    <property type="entry name" value="eIF3i"/>
    <property type="match status" value="1"/>
</dbReference>
<dbReference type="InterPro" id="IPR027525">
    <property type="entry name" value="eIF3i"/>
</dbReference>
<dbReference type="InterPro" id="IPR015943">
    <property type="entry name" value="WD40/YVTN_repeat-like_dom_sf"/>
</dbReference>
<dbReference type="InterPro" id="IPR019775">
    <property type="entry name" value="WD40_repeat_CS"/>
</dbReference>
<dbReference type="InterPro" id="IPR036322">
    <property type="entry name" value="WD40_repeat_dom_sf"/>
</dbReference>
<dbReference type="InterPro" id="IPR001680">
    <property type="entry name" value="WD40_rpt"/>
</dbReference>
<dbReference type="PANTHER" id="PTHR19877">
    <property type="entry name" value="EUKARYOTIC TRANSLATION INITIATION FACTOR 3 SUBUNIT I"/>
    <property type="match status" value="1"/>
</dbReference>
<dbReference type="PANTHER" id="PTHR19877:SF1">
    <property type="entry name" value="EUKARYOTIC TRANSLATION INITIATION FACTOR 3 SUBUNIT I"/>
    <property type="match status" value="1"/>
</dbReference>
<dbReference type="Pfam" id="PF24805">
    <property type="entry name" value="EIF3I"/>
    <property type="match status" value="1"/>
</dbReference>
<dbReference type="SMART" id="SM00320">
    <property type="entry name" value="WD40"/>
    <property type="match status" value="6"/>
</dbReference>
<dbReference type="SUPFAM" id="SSF50978">
    <property type="entry name" value="WD40 repeat-like"/>
    <property type="match status" value="1"/>
</dbReference>
<dbReference type="PROSITE" id="PS00678">
    <property type="entry name" value="WD_REPEATS_1"/>
    <property type="match status" value="1"/>
</dbReference>
<dbReference type="PROSITE" id="PS50082">
    <property type="entry name" value="WD_REPEATS_2"/>
    <property type="match status" value="2"/>
</dbReference>
<dbReference type="PROSITE" id="PS50294">
    <property type="entry name" value="WD_REPEATS_REGION"/>
    <property type="match status" value="2"/>
</dbReference>
<sequence>MRPILLSGHERALTQVKFNPDGDLIFSVAKDQHICVWFAHNGERLGTYHGHQGAIWTVDCDPTSTIIATGSADNTIKLWEIKTGRCLHTWEFPTAVKRVEFSPDGTRLLGVTEKRMGHLGTIVVLDVKLDVDAEQNPERAMTIVCDESKATVAGWSYLAKYIIAGHEDGSVSQYDAKNGDQLHSVQIHDMGSEIRDLQWSQDRTYFITASKDKTAKLVTARDLEVLKTYPADTPLNSAVITPKKDYVILGGGQAAMDVTTTSARQGKFEARFYHKIFEDEIGRVRGHFGPLNYVAAEPNGKGYASGGEDGYVRVHQFDKGYFDFMYEVERERKNKMEQAQQ</sequence>
<evidence type="ECO:0000255" key="1">
    <source>
        <dbReference type="HAMAP-Rule" id="MF_03008"/>
    </source>
</evidence>
<gene>
    <name evidence="1" type="primary">TIF34</name>
    <name type="ORF">MGG_01013</name>
</gene>
<organism>
    <name type="scientific">Pyricularia oryzae (strain 70-15 / ATCC MYA-4617 / FGSC 8958)</name>
    <name type="common">Rice blast fungus</name>
    <name type="synonym">Magnaporthe oryzae</name>
    <dbReference type="NCBI Taxonomy" id="242507"/>
    <lineage>
        <taxon>Eukaryota</taxon>
        <taxon>Fungi</taxon>
        <taxon>Dikarya</taxon>
        <taxon>Ascomycota</taxon>
        <taxon>Pezizomycotina</taxon>
        <taxon>Sordariomycetes</taxon>
        <taxon>Sordariomycetidae</taxon>
        <taxon>Magnaporthales</taxon>
        <taxon>Pyriculariaceae</taxon>
        <taxon>Pyricularia</taxon>
    </lineage>
</organism>